<accession>Q0WMV8</accession>
<accession>O80873</accession>
<feature type="chain" id="PRO_0000218720" description="PHD finger-like domain-containing protein 5B">
    <location>
        <begin position="1"/>
        <end position="110"/>
    </location>
</feature>
<gene>
    <name type="ordered locus">At1g07170</name>
    <name type="ORF">F10K1.12</name>
</gene>
<evidence type="ECO:0000305" key="1"/>
<dbReference type="EMBL" id="AC067971">
    <property type="protein sequence ID" value="AAF82203.1"/>
    <property type="status" value="ALT_SEQ"/>
    <property type="molecule type" value="Genomic_DNA"/>
</dbReference>
<dbReference type="EMBL" id="CP002684">
    <property type="protein sequence ID" value="AEE28085.1"/>
    <property type="molecule type" value="Genomic_DNA"/>
</dbReference>
<dbReference type="EMBL" id="CP002684">
    <property type="protein sequence ID" value="AEE28086.1"/>
    <property type="molecule type" value="Genomic_DNA"/>
</dbReference>
<dbReference type="EMBL" id="CP002684">
    <property type="protein sequence ID" value="AEE28087.1"/>
    <property type="molecule type" value="Genomic_DNA"/>
</dbReference>
<dbReference type="EMBL" id="CP002684">
    <property type="protein sequence ID" value="ANM58882.1"/>
    <property type="molecule type" value="Genomic_DNA"/>
</dbReference>
<dbReference type="EMBL" id="CP002684">
    <property type="protein sequence ID" value="ANM58883.1"/>
    <property type="molecule type" value="Genomic_DNA"/>
</dbReference>
<dbReference type="EMBL" id="CP002684">
    <property type="protein sequence ID" value="ANM58884.1"/>
    <property type="molecule type" value="Genomic_DNA"/>
</dbReference>
<dbReference type="EMBL" id="BT008548">
    <property type="protein sequence ID" value="AAP40375.1"/>
    <property type="molecule type" value="mRNA"/>
</dbReference>
<dbReference type="EMBL" id="BT008644">
    <property type="protein sequence ID" value="AAP40459.1"/>
    <property type="molecule type" value="mRNA"/>
</dbReference>
<dbReference type="EMBL" id="AK229703">
    <property type="protein sequence ID" value="BAF01542.1"/>
    <property type="molecule type" value="mRNA"/>
</dbReference>
<dbReference type="EMBL" id="AY088771">
    <property type="protein sequence ID" value="AAM67084.1"/>
    <property type="molecule type" value="mRNA"/>
</dbReference>
<dbReference type="PIR" id="G86206">
    <property type="entry name" value="G86206"/>
</dbReference>
<dbReference type="RefSeq" id="NP_001077473.1">
    <property type="nucleotide sequence ID" value="NM_001084004.1"/>
</dbReference>
<dbReference type="RefSeq" id="NP_001184928.1">
    <property type="nucleotide sequence ID" value="NM_001197999.1"/>
</dbReference>
<dbReference type="RefSeq" id="NP_001318938.1">
    <property type="nucleotide sequence ID" value="NM_001331682.1"/>
</dbReference>
<dbReference type="RefSeq" id="NP_001321285.1">
    <property type="nucleotide sequence ID" value="NM_001331684.1"/>
</dbReference>
<dbReference type="RefSeq" id="NP_001321286.1">
    <property type="nucleotide sequence ID" value="NM_001331683.1"/>
</dbReference>
<dbReference type="RefSeq" id="NP_563782.1">
    <property type="nucleotide sequence ID" value="NM_100591.4"/>
</dbReference>
<dbReference type="RefSeq" id="NP_565691.1">
    <property type="nucleotide sequence ID" value="NM_128555.4"/>
</dbReference>
<dbReference type="SMR" id="Q0WMV8"/>
<dbReference type="BioGRID" id="22469">
    <property type="interactions" value="5"/>
</dbReference>
<dbReference type="BioGRID" id="2901">
    <property type="interactions" value="5"/>
</dbReference>
<dbReference type="FunCoup" id="Q0WMV8">
    <property type="interactions" value="3971"/>
</dbReference>
<dbReference type="STRING" id="3702.Q0WMV8"/>
<dbReference type="EnsemblPlants" id="AT1G07170.1">
    <property type="protein sequence ID" value="AT1G07170.1"/>
    <property type="gene ID" value="AT1G07170"/>
</dbReference>
<dbReference type="EnsemblPlants" id="AT1G07170.2">
    <property type="protein sequence ID" value="AT1G07170.2"/>
    <property type="gene ID" value="AT1G07170"/>
</dbReference>
<dbReference type="EnsemblPlants" id="AT1G07170.3">
    <property type="protein sequence ID" value="AT1G07170.3"/>
    <property type="gene ID" value="AT1G07170"/>
</dbReference>
<dbReference type="EnsemblPlants" id="AT1G07170.4">
    <property type="protein sequence ID" value="AT1G07170.4"/>
    <property type="gene ID" value="AT1G07170"/>
</dbReference>
<dbReference type="EnsemblPlants" id="AT1G07170.5">
    <property type="protein sequence ID" value="AT1G07170.5"/>
    <property type="gene ID" value="AT1G07170"/>
</dbReference>
<dbReference type="EnsemblPlants" id="AT1G07170.6">
    <property type="protein sequence ID" value="AT1G07170.6"/>
    <property type="gene ID" value="AT1G07170"/>
</dbReference>
<dbReference type="EnsemblPlants" id="AT2G30000.1">
    <property type="protein sequence ID" value="AT2G30000.1"/>
    <property type="gene ID" value="AT2G30000"/>
</dbReference>
<dbReference type="GeneID" id="837228"/>
<dbReference type="Gramene" id="AT1G07170.1">
    <property type="protein sequence ID" value="AT1G07170.1"/>
    <property type="gene ID" value="AT1G07170"/>
</dbReference>
<dbReference type="Gramene" id="AT1G07170.2">
    <property type="protein sequence ID" value="AT1G07170.2"/>
    <property type="gene ID" value="AT1G07170"/>
</dbReference>
<dbReference type="Gramene" id="AT1G07170.3">
    <property type="protein sequence ID" value="AT1G07170.3"/>
    <property type="gene ID" value="AT1G07170"/>
</dbReference>
<dbReference type="Gramene" id="AT1G07170.4">
    <property type="protein sequence ID" value="AT1G07170.4"/>
    <property type="gene ID" value="AT1G07170"/>
</dbReference>
<dbReference type="Gramene" id="AT1G07170.5">
    <property type="protein sequence ID" value="AT1G07170.5"/>
    <property type="gene ID" value="AT1G07170"/>
</dbReference>
<dbReference type="Gramene" id="AT1G07170.6">
    <property type="protein sequence ID" value="AT1G07170.6"/>
    <property type="gene ID" value="AT1G07170"/>
</dbReference>
<dbReference type="Gramene" id="AT2G30000.1">
    <property type="protein sequence ID" value="AT2G30000.1"/>
    <property type="gene ID" value="AT2G30000"/>
</dbReference>
<dbReference type="KEGG" id="ath:AT1G07170"/>
<dbReference type="KEGG" id="ath:AT2G30000"/>
<dbReference type="Araport" id="AT1G07170"/>
<dbReference type="TAIR" id="AT1G07170"/>
<dbReference type="HOGENOM" id="CLU_110369_2_0_1"/>
<dbReference type="InParanoid" id="Q0WMV8"/>
<dbReference type="OMA" id="AYYCWEC"/>
<dbReference type="OrthoDB" id="10248186at2759"/>
<dbReference type="PhylomeDB" id="Q0WMV8"/>
<dbReference type="PRO" id="PR:Q0WMV8"/>
<dbReference type="Proteomes" id="UP000006548">
    <property type="component" value="Chromosome 1"/>
</dbReference>
<dbReference type="ExpressionAtlas" id="Q0WMV8">
    <property type="expression patterns" value="baseline and differential"/>
</dbReference>
<dbReference type="GO" id="GO:0000398">
    <property type="term" value="P:mRNA splicing, via spliceosome"/>
    <property type="evidence" value="ECO:0007669"/>
    <property type="project" value="InterPro"/>
</dbReference>
<dbReference type="InterPro" id="IPR005345">
    <property type="entry name" value="PHF5"/>
</dbReference>
<dbReference type="PANTHER" id="PTHR13120">
    <property type="entry name" value="PHD FINGER-LIKE DOMAIN-CONTAINING PROTEIN 5A"/>
    <property type="match status" value="1"/>
</dbReference>
<dbReference type="Pfam" id="PF03660">
    <property type="entry name" value="PHF5"/>
    <property type="match status" value="1"/>
</dbReference>
<dbReference type="PIRSF" id="PIRSF016468">
    <property type="entry name" value="PHF5"/>
    <property type="match status" value="1"/>
</dbReference>
<organism>
    <name type="scientific">Arabidopsis thaliana</name>
    <name type="common">Mouse-ear cress</name>
    <dbReference type="NCBI Taxonomy" id="3702"/>
    <lineage>
        <taxon>Eukaryota</taxon>
        <taxon>Viridiplantae</taxon>
        <taxon>Streptophyta</taxon>
        <taxon>Embryophyta</taxon>
        <taxon>Tracheophyta</taxon>
        <taxon>Spermatophyta</taxon>
        <taxon>Magnoliopsida</taxon>
        <taxon>eudicotyledons</taxon>
        <taxon>Gunneridae</taxon>
        <taxon>Pentapetalae</taxon>
        <taxon>rosids</taxon>
        <taxon>malvids</taxon>
        <taxon>Brassicales</taxon>
        <taxon>Brassicaceae</taxon>
        <taxon>Camelineae</taxon>
        <taxon>Arabidopsis</taxon>
    </lineage>
</organism>
<proteinExistence type="inferred from homology"/>
<keyword id="KW-1185">Reference proteome</keyword>
<comment type="similarity">
    <text evidence="1">Belongs to the PHF5 family.</text>
</comment>
<comment type="sequence caution" evidence="1">
    <conflict type="erroneous gene model prediction">
        <sequence resource="EMBL-CDS" id="AAF82203"/>
    </conflict>
</comment>
<reference key="1">
    <citation type="journal article" date="2000" name="Nature">
        <title>Sequence and analysis of chromosome 1 of the plant Arabidopsis thaliana.</title>
        <authorList>
            <person name="Theologis A."/>
            <person name="Ecker J.R."/>
            <person name="Palm C.J."/>
            <person name="Federspiel N.A."/>
            <person name="Kaul S."/>
            <person name="White O."/>
            <person name="Alonso J."/>
            <person name="Altafi H."/>
            <person name="Araujo R."/>
            <person name="Bowman C.L."/>
            <person name="Brooks S.Y."/>
            <person name="Buehler E."/>
            <person name="Chan A."/>
            <person name="Chao Q."/>
            <person name="Chen H."/>
            <person name="Cheuk R.F."/>
            <person name="Chin C.W."/>
            <person name="Chung M.K."/>
            <person name="Conn L."/>
            <person name="Conway A.B."/>
            <person name="Conway A.R."/>
            <person name="Creasy T.H."/>
            <person name="Dewar K."/>
            <person name="Dunn P."/>
            <person name="Etgu P."/>
            <person name="Feldblyum T.V."/>
            <person name="Feng J.-D."/>
            <person name="Fong B."/>
            <person name="Fujii C.Y."/>
            <person name="Gill J.E."/>
            <person name="Goldsmith A.D."/>
            <person name="Haas B."/>
            <person name="Hansen N.F."/>
            <person name="Hughes B."/>
            <person name="Huizar L."/>
            <person name="Hunter J.L."/>
            <person name="Jenkins J."/>
            <person name="Johnson-Hopson C."/>
            <person name="Khan S."/>
            <person name="Khaykin E."/>
            <person name="Kim C.J."/>
            <person name="Koo H.L."/>
            <person name="Kremenetskaia I."/>
            <person name="Kurtz D.B."/>
            <person name="Kwan A."/>
            <person name="Lam B."/>
            <person name="Langin-Hooper S."/>
            <person name="Lee A."/>
            <person name="Lee J.M."/>
            <person name="Lenz C.A."/>
            <person name="Li J.H."/>
            <person name="Li Y.-P."/>
            <person name="Lin X."/>
            <person name="Liu S.X."/>
            <person name="Liu Z.A."/>
            <person name="Luros J.S."/>
            <person name="Maiti R."/>
            <person name="Marziali A."/>
            <person name="Militscher J."/>
            <person name="Miranda M."/>
            <person name="Nguyen M."/>
            <person name="Nierman W.C."/>
            <person name="Osborne B.I."/>
            <person name="Pai G."/>
            <person name="Peterson J."/>
            <person name="Pham P.K."/>
            <person name="Rizzo M."/>
            <person name="Rooney T."/>
            <person name="Rowley D."/>
            <person name="Sakano H."/>
            <person name="Salzberg S.L."/>
            <person name="Schwartz J.R."/>
            <person name="Shinn P."/>
            <person name="Southwick A.M."/>
            <person name="Sun H."/>
            <person name="Tallon L.J."/>
            <person name="Tambunga G."/>
            <person name="Toriumi M.J."/>
            <person name="Town C.D."/>
            <person name="Utterback T."/>
            <person name="Van Aken S."/>
            <person name="Vaysberg M."/>
            <person name="Vysotskaia V.S."/>
            <person name="Walker M."/>
            <person name="Wu D."/>
            <person name="Yu G."/>
            <person name="Fraser C.M."/>
            <person name="Venter J.C."/>
            <person name="Davis R.W."/>
        </authorList>
    </citation>
    <scope>NUCLEOTIDE SEQUENCE [LARGE SCALE GENOMIC DNA]</scope>
    <source>
        <strain>cv. Columbia</strain>
    </source>
</reference>
<reference key="2">
    <citation type="journal article" date="2017" name="Plant J.">
        <title>Araport11: a complete reannotation of the Arabidopsis thaliana reference genome.</title>
        <authorList>
            <person name="Cheng C.Y."/>
            <person name="Krishnakumar V."/>
            <person name="Chan A.P."/>
            <person name="Thibaud-Nissen F."/>
            <person name="Schobel S."/>
            <person name="Town C.D."/>
        </authorList>
    </citation>
    <scope>GENOME REANNOTATION</scope>
    <source>
        <strain>cv. Columbia</strain>
    </source>
</reference>
<reference key="3">
    <citation type="journal article" date="2003" name="Science">
        <title>Empirical analysis of transcriptional activity in the Arabidopsis genome.</title>
        <authorList>
            <person name="Yamada K."/>
            <person name="Lim J."/>
            <person name="Dale J.M."/>
            <person name="Chen H."/>
            <person name="Shinn P."/>
            <person name="Palm C.J."/>
            <person name="Southwick A.M."/>
            <person name="Wu H.C."/>
            <person name="Kim C.J."/>
            <person name="Nguyen M."/>
            <person name="Pham P.K."/>
            <person name="Cheuk R.F."/>
            <person name="Karlin-Newmann G."/>
            <person name="Liu S.X."/>
            <person name="Lam B."/>
            <person name="Sakano H."/>
            <person name="Wu T."/>
            <person name="Yu G."/>
            <person name="Miranda M."/>
            <person name="Quach H.L."/>
            <person name="Tripp M."/>
            <person name="Chang C.H."/>
            <person name="Lee J.M."/>
            <person name="Toriumi M.J."/>
            <person name="Chan M.M."/>
            <person name="Tang C.C."/>
            <person name="Onodera C.S."/>
            <person name="Deng J.M."/>
            <person name="Akiyama K."/>
            <person name="Ansari Y."/>
            <person name="Arakawa T."/>
            <person name="Banh J."/>
            <person name="Banno F."/>
            <person name="Bowser L."/>
            <person name="Brooks S.Y."/>
            <person name="Carninci P."/>
            <person name="Chao Q."/>
            <person name="Choy N."/>
            <person name="Enju A."/>
            <person name="Goldsmith A.D."/>
            <person name="Gurjal M."/>
            <person name="Hansen N.F."/>
            <person name="Hayashizaki Y."/>
            <person name="Johnson-Hopson C."/>
            <person name="Hsuan V.W."/>
            <person name="Iida K."/>
            <person name="Karnes M."/>
            <person name="Khan S."/>
            <person name="Koesema E."/>
            <person name="Ishida J."/>
            <person name="Jiang P.X."/>
            <person name="Jones T."/>
            <person name="Kawai J."/>
            <person name="Kamiya A."/>
            <person name="Meyers C."/>
            <person name="Nakajima M."/>
            <person name="Narusaka M."/>
            <person name="Seki M."/>
            <person name="Sakurai T."/>
            <person name="Satou M."/>
            <person name="Tamse R."/>
            <person name="Vaysberg M."/>
            <person name="Wallender E.K."/>
            <person name="Wong C."/>
            <person name="Yamamura Y."/>
            <person name="Yuan S."/>
            <person name="Shinozaki K."/>
            <person name="Davis R.W."/>
            <person name="Theologis A."/>
            <person name="Ecker J.R."/>
        </authorList>
    </citation>
    <scope>NUCLEOTIDE SEQUENCE [LARGE SCALE MRNA]</scope>
    <source>
        <strain>cv. Columbia</strain>
    </source>
</reference>
<reference key="4">
    <citation type="submission" date="2006-07" db="EMBL/GenBank/DDBJ databases">
        <title>Large-scale analysis of RIKEN Arabidopsis full-length (RAFL) cDNAs.</title>
        <authorList>
            <person name="Totoki Y."/>
            <person name="Seki M."/>
            <person name="Ishida J."/>
            <person name="Nakajima M."/>
            <person name="Enju A."/>
            <person name="Kamiya A."/>
            <person name="Narusaka M."/>
            <person name="Shin-i T."/>
            <person name="Nakagawa M."/>
            <person name="Sakamoto N."/>
            <person name="Oishi K."/>
            <person name="Kohara Y."/>
            <person name="Kobayashi M."/>
            <person name="Toyoda A."/>
            <person name="Sakaki Y."/>
            <person name="Sakurai T."/>
            <person name="Iida K."/>
            <person name="Akiyama K."/>
            <person name="Satou M."/>
            <person name="Toyoda T."/>
            <person name="Konagaya A."/>
            <person name="Carninci P."/>
            <person name="Kawai J."/>
            <person name="Hayashizaki Y."/>
            <person name="Shinozaki K."/>
        </authorList>
    </citation>
    <scope>NUCLEOTIDE SEQUENCE [LARGE SCALE MRNA]</scope>
    <source>
        <strain>cv. Columbia</strain>
    </source>
</reference>
<reference key="5">
    <citation type="submission" date="2002-03" db="EMBL/GenBank/DDBJ databases">
        <title>Full-length cDNA from Arabidopsis thaliana.</title>
        <authorList>
            <person name="Brover V.V."/>
            <person name="Troukhan M.E."/>
            <person name="Alexandrov N.A."/>
            <person name="Lu Y.-P."/>
            <person name="Flavell R.B."/>
            <person name="Feldmann K.A."/>
        </authorList>
    </citation>
    <scope>NUCLEOTIDE SEQUENCE [LARGE SCALE MRNA]</scope>
</reference>
<protein>
    <recommendedName>
        <fullName>PHD finger-like domain-containing protein 5B</fullName>
    </recommendedName>
</protein>
<name>PHF5B_ARATH</name>
<sequence length="110" mass="12429">MAKHHPDLIMCRKQPGIAIGRLCEKCDGKCVICDSYVRPCTLVRICDECNYGSFQGRCVICGGVGISDAYYCKECTQQEKDRDGCPKIVNLGSAKTDLFYERKKYGFKKR</sequence>